<geneLocation type="chloroplast"/>
<name>PETG_SKECO</name>
<evidence type="ECO:0000255" key="1">
    <source>
        <dbReference type="HAMAP-Rule" id="MF_00432"/>
    </source>
</evidence>
<organism>
    <name type="scientific">Skeletonema costatum</name>
    <name type="common">Marine centric diatom</name>
    <name type="synonym">Melosira costata</name>
    <dbReference type="NCBI Taxonomy" id="2843"/>
    <lineage>
        <taxon>Eukaryota</taxon>
        <taxon>Sar</taxon>
        <taxon>Stramenopiles</taxon>
        <taxon>Ochrophyta</taxon>
        <taxon>Bacillariophyta</taxon>
        <taxon>Coscinodiscophyceae</taxon>
        <taxon>Thalassiosirophycidae</taxon>
        <taxon>Thalassiosirales</taxon>
        <taxon>Skeletonemataceae</taxon>
        <taxon>Skeletonema</taxon>
    </lineage>
</organism>
<dbReference type="EMBL" id="AJ132266">
    <property type="protein sequence ID" value="CAA10632.1"/>
    <property type="molecule type" value="Genomic_DNA"/>
</dbReference>
<dbReference type="RefSeq" id="YP_010201199.1">
    <property type="nucleotide sequence ID" value="NC_058703.1"/>
</dbReference>
<dbReference type="SMR" id="O96811"/>
<dbReference type="GeneID" id="68638412"/>
<dbReference type="GO" id="GO:0009535">
    <property type="term" value="C:chloroplast thylakoid membrane"/>
    <property type="evidence" value="ECO:0007669"/>
    <property type="project" value="UniProtKB-SubCell"/>
</dbReference>
<dbReference type="GO" id="GO:0009512">
    <property type="term" value="C:cytochrome b6f complex"/>
    <property type="evidence" value="ECO:0007669"/>
    <property type="project" value="InterPro"/>
</dbReference>
<dbReference type="GO" id="GO:0045158">
    <property type="term" value="F:electron transporter, transferring electrons within cytochrome b6/f complex of photosystem II activity"/>
    <property type="evidence" value="ECO:0007669"/>
    <property type="project" value="UniProtKB-UniRule"/>
</dbReference>
<dbReference type="GO" id="GO:0017004">
    <property type="term" value="P:cytochrome complex assembly"/>
    <property type="evidence" value="ECO:0007669"/>
    <property type="project" value="UniProtKB-UniRule"/>
</dbReference>
<dbReference type="GO" id="GO:0015979">
    <property type="term" value="P:photosynthesis"/>
    <property type="evidence" value="ECO:0007669"/>
    <property type="project" value="UniProtKB-KW"/>
</dbReference>
<dbReference type="HAMAP" id="MF_00432">
    <property type="entry name" value="Cytb6_f_PetG"/>
    <property type="match status" value="1"/>
</dbReference>
<dbReference type="InterPro" id="IPR003683">
    <property type="entry name" value="Cyt_6/f_cplx_su5"/>
</dbReference>
<dbReference type="InterPro" id="IPR036099">
    <property type="entry name" value="Cyt_6/f_cplx_su5_sf"/>
</dbReference>
<dbReference type="NCBIfam" id="NF001907">
    <property type="entry name" value="PRK00665.1"/>
    <property type="match status" value="1"/>
</dbReference>
<dbReference type="Pfam" id="PF02529">
    <property type="entry name" value="PetG"/>
    <property type="match status" value="1"/>
</dbReference>
<dbReference type="PIRSF" id="PIRSF000034">
    <property type="entry name" value="Cyt_b6-f_V"/>
    <property type="match status" value="1"/>
</dbReference>
<dbReference type="SUPFAM" id="SSF103446">
    <property type="entry name" value="PetG subunit of the cytochrome b6f complex"/>
    <property type="match status" value="1"/>
</dbReference>
<gene>
    <name evidence="1" type="primary">petG</name>
</gene>
<protein>
    <recommendedName>
        <fullName evidence="1">Cytochrome b6-f complex subunit 5</fullName>
    </recommendedName>
    <alternativeName>
        <fullName evidence="1">Cytochrome b6-f complex subunit PetG</fullName>
    </alternativeName>
    <alternativeName>
        <fullName evidence="1">Cytochrome b6-f complex subunit V</fullName>
    </alternativeName>
</protein>
<feature type="chain" id="PRO_0000216404" description="Cytochrome b6-f complex subunit 5">
    <location>
        <begin position="1"/>
        <end position="37"/>
    </location>
</feature>
<feature type="transmembrane region" description="Helical" evidence="1">
    <location>
        <begin position="5"/>
        <end position="25"/>
    </location>
</feature>
<reference key="1">
    <citation type="submission" date="1999-01" db="EMBL/GenBank/DDBJ databases">
        <title>Plastid DNA sequences of Skeletonema costatum NIES 323.</title>
        <authorList>
            <person name="Tada N."/>
            <person name="Otsuka S."/>
            <person name="Oyaizu H."/>
            <person name="Matsumoto S."/>
        </authorList>
    </citation>
    <scope>NUCLEOTIDE SEQUENCE [GENOMIC DNA]</scope>
    <source>
        <strain>NIES-323 / Sk-85w</strain>
    </source>
</reference>
<sequence length="37" mass="4089">MVEPLLSGIVLGMITVSAFGLFVAAFLQYRRGNQFEI</sequence>
<proteinExistence type="inferred from homology"/>
<keyword id="KW-0150">Chloroplast</keyword>
<keyword id="KW-0249">Electron transport</keyword>
<keyword id="KW-0472">Membrane</keyword>
<keyword id="KW-0602">Photosynthesis</keyword>
<keyword id="KW-0934">Plastid</keyword>
<keyword id="KW-0793">Thylakoid</keyword>
<keyword id="KW-0812">Transmembrane</keyword>
<keyword id="KW-1133">Transmembrane helix</keyword>
<keyword id="KW-0813">Transport</keyword>
<accession>O96811</accession>
<comment type="function">
    <text evidence="1">Component of the cytochrome b6-f complex, which mediates electron transfer between photosystem II (PSII) and photosystem I (PSI), cyclic electron flow around PSI, and state transitions. PetG is required for either the stability or assembly of the cytochrome b6-f complex.</text>
</comment>
<comment type="subunit">
    <text evidence="1">The 4 large subunits of the cytochrome b6-f complex are cytochrome b6, subunit IV (17 kDa polypeptide, PetD), cytochrome f and the Rieske protein, while the 4 small subunits are PetG, PetL, PetM and PetN. The complex functions as a dimer.</text>
</comment>
<comment type="subcellular location">
    <subcellularLocation>
        <location evidence="1">Plastid</location>
        <location evidence="1">Chloroplast thylakoid membrane</location>
        <topology evidence="1">Single-pass membrane protein</topology>
    </subcellularLocation>
</comment>
<comment type="similarity">
    <text evidence="1">Belongs to the PetG family.</text>
</comment>